<name>RL3A_SCHPO</name>
<gene>
    <name type="primary">rpl301</name>
    <name type="synonym">rpl3a</name>
    <name type="ORF">SPAC17A5.03</name>
</gene>
<sequence>MSHCKFEQPRHGSLGFLPRKRASRQRGKVKAFPKDDASKPVHLTAFLGYKAGMTHIVRDLDRPGSKMHKREILEAVTVIETPPMVVVGVVGYVETPRGLRSLTTVWAEHLSEEVKRRFYKNWFKSKKKAFTKYAKKYAESTQSINRELERIKKYCSVVRVLAHTQIRKTPLAQKKAHLMEIQVNGGSVADKVEWAREHFEKTVDIKSTFEQNEMIDVIGVTRGKGNEGTTARWGTKRLPRKTHRGLRKVACIGAWHPANVQWTVARAGNAGYMHRTQLNSKIYRIGAGDDAKNASTDFDATEKRITPMGGFVRYGVVENDFVMLNGATPGPVKRVLTLRKSLLTHTSRKALEPVSLKWIDTASKFGHGRFQTPAEAKQFLGTLKKDVA</sequence>
<dbReference type="EMBL" id="U00798">
    <property type="protein sequence ID" value="AAA19655.1"/>
    <property type="molecule type" value="Genomic_DNA"/>
</dbReference>
<dbReference type="EMBL" id="CU329670">
    <property type="protein sequence ID" value="CAB11503.1"/>
    <property type="molecule type" value="Genomic_DNA"/>
</dbReference>
<dbReference type="PIR" id="T37818">
    <property type="entry name" value="T37818"/>
</dbReference>
<dbReference type="RefSeq" id="NP_593471.1">
    <property type="nucleotide sequence ID" value="NM_001018904.2"/>
</dbReference>
<dbReference type="PDB" id="8ESQ">
    <property type="method" value="EM"/>
    <property type="resolution" value="2.80 A"/>
    <property type="chains" value="B=1-388"/>
</dbReference>
<dbReference type="PDB" id="8ESR">
    <property type="method" value="EM"/>
    <property type="resolution" value="3.20 A"/>
    <property type="chains" value="B=1-388"/>
</dbReference>
<dbReference type="PDB" id="8ETC">
    <property type="method" value="EM"/>
    <property type="resolution" value="3.10 A"/>
    <property type="chains" value="B=1-388"/>
</dbReference>
<dbReference type="PDB" id="8ETG">
    <property type="method" value="EM"/>
    <property type="resolution" value="3.40 A"/>
    <property type="chains" value="B=1-388"/>
</dbReference>
<dbReference type="PDB" id="8ETH">
    <property type="method" value="EM"/>
    <property type="resolution" value="3.80 A"/>
    <property type="chains" value="B=1-388"/>
</dbReference>
<dbReference type="PDB" id="8ETI">
    <property type="method" value="EM"/>
    <property type="resolution" value="3.70 A"/>
    <property type="chains" value="B=1-388"/>
</dbReference>
<dbReference type="PDB" id="8ETJ">
    <property type="method" value="EM"/>
    <property type="resolution" value="3.20 A"/>
    <property type="chains" value="B=1-388"/>
</dbReference>
<dbReference type="PDB" id="8EUG">
    <property type="method" value="EM"/>
    <property type="resolution" value="2.80 A"/>
    <property type="chains" value="B=1-388"/>
</dbReference>
<dbReference type="PDB" id="8EUI">
    <property type="method" value="EM"/>
    <property type="resolution" value="3.10 A"/>
    <property type="chains" value="B=1-388"/>
</dbReference>
<dbReference type="PDB" id="8EUP">
    <property type="method" value="EM"/>
    <property type="resolution" value="3.10 A"/>
    <property type="chains" value="B=1-388"/>
</dbReference>
<dbReference type="PDB" id="8EUY">
    <property type="method" value="EM"/>
    <property type="resolution" value="3.00 A"/>
    <property type="chains" value="B=1-388"/>
</dbReference>
<dbReference type="PDB" id="8EV3">
    <property type="method" value="EM"/>
    <property type="resolution" value="3.00 A"/>
    <property type="chains" value="B=1-388"/>
</dbReference>
<dbReference type="PDB" id="9AXT">
    <property type="method" value="EM"/>
    <property type="resolution" value="2.40 A"/>
    <property type="chains" value="BO=1-388"/>
</dbReference>
<dbReference type="PDB" id="9AXU">
    <property type="method" value="EM"/>
    <property type="resolution" value="1.94 A"/>
    <property type="chains" value="O=1-388"/>
</dbReference>
<dbReference type="PDB" id="9AXV">
    <property type="method" value="EM"/>
    <property type="resolution" value="2.40 A"/>
    <property type="chains" value="BO=1-388"/>
</dbReference>
<dbReference type="PDBsum" id="8ESQ"/>
<dbReference type="PDBsum" id="8ESR"/>
<dbReference type="PDBsum" id="8ETC"/>
<dbReference type="PDBsum" id="8ETG"/>
<dbReference type="PDBsum" id="8ETH"/>
<dbReference type="PDBsum" id="8ETI"/>
<dbReference type="PDBsum" id="8ETJ"/>
<dbReference type="PDBsum" id="8EUG"/>
<dbReference type="PDBsum" id="8EUI"/>
<dbReference type="PDBsum" id="8EUP"/>
<dbReference type="PDBsum" id="8EUY"/>
<dbReference type="PDBsum" id="8EV3"/>
<dbReference type="PDBsum" id="9AXT"/>
<dbReference type="PDBsum" id="9AXU"/>
<dbReference type="PDBsum" id="9AXV"/>
<dbReference type="EMDB" id="EMD-43972"/>
<dbReference type="EMDB" id="EMD-43973"/>
<dbReference type="EMDB" id="EMD-43976"/>
<dbReference type="SMR" id="P40372"/>
<dbReference type="BioGRID" id="278734">
    <property type="interactions" value="12"/>
</dbReference>
<dbReference type="FunCoup" id="P40372">
    <property type="interactions" value="313"/>
</dbReference>
<dbReference type="IntAct" id="P40372">
    <property type="interactions" value="2"/>
</dbReference>
<dbReference type="STRING" id="284812.P40372"/>
<dbReference type="iPTMnet" id="P40372"/>
<dbReference type="PaxDb" id="4896-SPAC17A5.03.1"/>
<dbReference type="EnsemblFungi" id="SPAC17A5.03.1">
    <property type="protein sequence ID" value="SPAC17A5.03.1:pep"/>
    <property type="gene ID" value="SPAC17A5.03"/>
</dbReference>
<dbReference type="GeneID" id="2542265"/>
<dbReference type="KEGG" id="spo:2542265"/>
<dbReference type="PomBase" id="SPAC17A5.03">
    <property type="gene designation" value="rpl301"/>
</dbReference>
<dbReference type="VEuPathDB" id="FungiDB:SPAC17A5.03"/>
<dbReference type="eggNOG" id="KOG0746">
    <property type="taxonomic scope" value="Eukaryota"/>
</dbReference>
<dbReference type="HOGENOM" id="CLU_033361_2_1_1"/>
<dbReference type="InParanoid" id="P40372"/>
<dbReference type="OMA" id="QRTEYNK"/>
<dbReference type="PhylomeDB" id="P40372"/>
<dbReference type="Reactome" id="R-SPO-156827">
    <property type="pathway name" value="L13a-mediated translational silencing of Ceruloplasmin expression"/>
</dbReference>
<dbReference type="Reactome" id="R-SPO-1799339">
    <property type="pathway name" value="SRP-dependent cotranslational protein targeting to membrane"/>
</dbReference>
<dbReference type="Reactome" id="R-SPO-72689">
    <property type="pathway name" value="Formation of a pool of free 40S subunits"/>
</dbReference>
<dbReference type="Reactome" id="R-SPO-72706">
    <property type="pathway name" value="GTP hydrolysis and joining of the 60S ribosomal subunit"/>
</dbReference>
<dbReference type="Reactome" id="R-SPO-975956">
    <property type="pathway name" value="Nonsense Mediated Decay (NMD) independent of the Exon Junction Complex (EJC)"/>
</dbReference>
<dbReference type="Reactome" id="R-SPO-975957">
    <property type="pathway name" value="Nonsense Mediated Decay (NMD) enhanced by the Exon Junction Complex (EJC)"/>
</dbReference>
<dbReference type="PRO" id="PR:P40372"/>
<dbReference type="Proteomes" id="UP000002485">
    <property type="component" value="Chromosome I"/>
</dbReference>
<dbReference type="GO" id="GO:0005829">
    <property type="term" value="C:cytosol"/>
    <property type="evidence" value="ECO:0007005"/>
    <property type="project" value="PomBase"/>
</dbReference>
<dbReference type="GO" id="GO:0022625">
    <property type="term" value="C:cytosolic large ribosomal subunit"/>
    <property type="evidence" value="ECO:0000269"/>
    <property type="project" value="PomBase"/>
</dbReference>
<dbReference type="GO" id="GO:0030684">
    <property type="term" value="C:preribosome"/>
    <property type="evidence" value="ECO:0000314"/>
    <property type="project" value="PomBase"/>
</dbReference>
<dbReference type="GO" id="GO:0003723">
    <property type="term" value="F:RNA binding"/>
    <property type="evidence" value="ECO:0000318"/>
    <property type="project" value="GO_Central"/>
</dbReference>
<dbReference type="GO" id="GO:0003735">
    <property type="term" value="F:structural constituent of ribosome"/>
    <property type="evidence" value="ECO:0000318"/>
    <property type="project" value="GO_Central"/>
</dbReference>
<dbReference type="GO" id="GO:0002181">
    <property type="term" value="P:cytoplasmic translation"/>
    <property type="evidence" value="ECO:0000266"/>
    <property type="project" value="PomBase"/>
</dbReference>
<dbReference type="GO" id="GO:0006412">
    <property type="term" value="P:translation"/>
    <property type="evidence" value="ECO:0000318"/>
    <property type="project" value="GO_Central"/>
</dbReference>
<dbReference type="FunFam" id="2.40.30.10:FF:000079">
    <property type="entry name" value="60S ribosomal protein L3"/>
    <property type="match status" value="1"/>
</dbReference>
<dbReference type="FunFam" id="3.30.1430.10:FF:000001">
    <property type="entry name" value="60S ribosomal protein L3"/>
    <property type="match status" value="1"/>
</dbReference>
<dbReference type="FunFam" id="4.10.960.10:FF:000001">
    <property type="entry name" value="60S ribosomal protein L3"/>
    <property type="match status" value="1"/>
</dbReference>
<dbReference type="FunFam" id="4.10.960.10:FF:000002">
    <property type="entry name" value="60S ribosomal protein L3"/>
    <property type="match status" value="1"/>
</dbReference>
<dbReference type="FunFam" id="2.40.30.10:FF:000351">
    <property type="entry name" value="Ribosomal protein L3"/>
    <property type="match status" value="1"/>
</dbReference>
<dbReference type="Gene3D" id="3.30.1430.10">
    <property type="match status" value="1"/>
</dbReference>
<dbReference type="Gene3D" id="4.10.960.10">
    <property type="entry name" value="Ribosomal protein L3, domain 3"/>
    <property type="match status" value="1"/>
</dbReference>
<dbReference type="Gene3D" id="2.40.30.10">
    <property type="entry name" value="Translation factors"/>
    <property type="match status" value="1"/>
</dbReference>
<dbReference type="InterPro" id="IPR045077">
    <property type="entry name" value="L3_arc_euk"/>
</dbReference>
<dbReference type="InterPro" id="IPR044892">
    <property type="entry name" value="Ribosomal_L3_dom_3_arc_sf"/>
</dbReference>
<dbReference type="InterPro" id="IPR000597">
    <property type="entry name" value="Ribosomal_uL3"/>
</dbReference>
<dbReference type="InterPro" id="IPR019926">
    <property type="entry name" value="Ribosomal_uL3_CS"/>
</dbReference>
<dbReference type="InterPro" id="IPR009000">
    <property type="entry name" value="Transl_B-barrel_sf"/>
</dbReference>
<dbReference type="PANTHER" id="PTHR11363">
    <property type="entry name" value="60S RIBOSOMAL PROTEIN L3-RELATED"/>
    <property type="match status" value="1"/>
</dbReference>
<dbReference type="PANTHER" id="PTHR11363:SF5">
    <property type="entry name" value="LARGE RIBOSOMAL SUBUNIT PROTEIN UL3"/>
    <property type="match status" value="1"/>
</dbReference>
<dbReference type="Pfam" id="PF00297">
    <property type="entry name" value="Ribosomal_L3"/>
    <property type="match status" value="1"/>
</dbReference>
<dbReference type="SUPFAM" id="SSF50447">
    <property type="entry name" value="Translation proteins"/>
    <property type="match status" value="1"/>
</dbReference>
<dbReference type="PROSITE" id="PS00474">
    <property type="entry name" value="RIBOSOMAL_L3"/>
    <property type="match status" value="1"/>
</dbReference>
<reference key="1">
    <citation type="journal article" date="1994" name="Gene">
        <title>Two genes encoding ribosomal protein L3 of Schizosaccharomyces pombe and their proximal promoter regions.</title>
        <authorList>
            <person name="Liebich I."/>
            <person name="Kohler G."/>
            <person name="Witt I."/>
            <person name="Gross T."/>
            <person name="Kaufer N.F."/>
        </authorList>
    </citation>
    <scope>NUCLEOTIDE SEQUENCE [GENOMIC DNA]</scope>
    <source>
        <strain>972 / ATCC 24843</strain>
    </source>
</reference>
<reference key="2">
    <citation type="journal article" date="2002" name="Nature">
        <title>The genome sequence of Schizosaccharomyces pombe.</title>
        <authorList>
            <person name="Wood V."/>
            <person name="Gwilliam R."/>
            <person name="Rajandream M.A."/>
            <person name="Lyne M.H."/>
            <person name="Lyne R."/>
            <person name="Stewart A."/>
            <person name="Sgouros J.G."/>
            <person name="Peat N."/>
            <person name="Hayles J."/>
            <person name="Baker S.G."/>
            <person name="Basham D."/>
            <person name="Bowman S."/>
            <person name="Brooks K."/>
            <person name="Brown D."/>
            <person name="Brown S."/>
            <person name="Chillingworth T."/>
            <person name="Churcher C.M."/>
            <person name="Collins M."/>
            <person name="Connor R."/>
            <person name="Cronin A."/>
            <person name="Davis P."/>
            <person name="Feltwell T."/>
            <person name="Fraser A."/>
            <person name="Gentles S."/>
            <person name="Goble A."/>
            <person name="Hamlin N."/>
            <person name="Harris D.E."/>
            <person name="Hidalgo J."/>
            <person name="Hodgson G."/>
            <person name="Holroyd S."/>
            <person name="Hornsby T."/>
            <person name="Howarth S."/>
            <person name="Huckle E.J."/>
            <person name="Hunt S."/>
            <person name="Jagels K."/>
            <person name="James K.D."/>
            <person name="Jones L."/>
            <person name="Jones M."/>
            <person name="Leather S."/>
            <person name="McDonald S."/>
            <person name="McLean J."/>
            <person name="Mooney P."/>
            <person name="Moule S."/>
            <person name="Mungall K.L."/>
            <person name="Murphy L.D."/>
            <person name="Niblett D."/>
            <person name="Odell C."/>
            <person name="Oliver K."/>
            <person name="O'Neil S."/>
            <person name="Pearson D."/>
            <person name="Quail M.A."/>
            <person name="Rabbinowitsch E."/>
            <person name="Rutherford K.M."/>
            <person name="Rutter S."/>
            <person name="Saunders D."/>
            <person name="Seeger K."/>
            <person name="Sharp S."/>
            <person name="Skelton J."/>
            <person name="Simmonds M.N."/>
            <person name="Squares R."/>
            <person name="Squares S."/>
            <person name="Stevens K."/>
            <person name="Taylor K."/>
            <person name="Taylor R.G."/>
            <person name="Tivey A."/>
            <person name="Walsh S.V."/>
            <person name="Warren T."/>
            <person name="Whitehead S."/>
            <person name="Woodward J.R."/>
            <person name="Volckaert G."/>
            <person name="Aert R."/>
            <person name="Robben J."/>
            <person name="Grymonprez B."/>
            <person name="Weltjens I."/>
            <person name="Vanstreels E."/>
            <person name="Rieger M."/>
            <person name="Schaefer M."/>
            <person name="Mueller-Auer S."/>
            <person name="Gabel C."/>
            <person name="Fuchs M."/>
            <person name="Duesterhoeft A."/>
            <person name="Fritzc C."/>
            <person name="Holzer E."/>
            <person name="Moestl D."/>
            <person name="Hilbert H."/>
            <person name="Borzym K."/>
            <person name="Langer I."/>
            <person name="Beck A."/>
            <person name="Lehrach H."/>
            <person name="Reinhardt R."/>
            <person name="Pohl T.M."/>
            <person name="Eger P."/>
            <person name="Zimmermann W."/>
            <person name="Wedler H."/>
            <person name="Wambutt R."/>
            <person name="Purnelle B."/>
            <person name="Goffeau A."/>
            <person name="Cadieu E."/>
            <person name="Dreano S."/>
            <person name="Gloux S."/>
            <person name="Lelaure V."/>
            <person name="Mottier S."/>
            <person name="Galibert F."/>
            <person name="Aves S.J."/>
            <person name="Xiang Z."/>
            <person name="Hunt C."/>
            <person name="Moore K."/>
            <person name="Hurst S.M."/>
            <person name="Lucas M."/>
            <person name="Rochet M."/>
            <person name="Gaillardin C."/>
            <person name="Tallada V.A."/>
            <person name="Garzon A."/>
            <person name="Thode G."/>
            <person name="Daga R.R."/>
            <person name="Cruzado L."/>
            <person name="Jimenez J."/>
            <person name="Sanchez M."/>
            <person name="del Rey F."/>
            <person name="Benito J."/>
            <person name="Dominguez A."/>
            <person name="Revuelta J.L."/>
            <person name="Moreno S."/>
            <person name="Armstrong J."/>
            <person name="Forsburg S.L."/>
            <person name="Cerutti L."/>
            <person name="Lowe T."/>
            <person name="McCombie W.R."/>
            <person name="Paulsen I."/>
            <person name="Potashkin J."/>
            <person name="Shpakovski G.V."/>
            <person name="Ussery D."/>
            <person name="Barrell B.G."/>
            <person name="Nurse P."/>
        </authorList>
    </citation>
    <scope>NUCLEOTIDE SEQUENCE [LARGE SCALE GENOMIC DNA]</scope>
    <source>
        <strain>972 / ATCC 24843</strain>
    </source>
</reference>
<reference key="3">
    <citation type="journal article" date="1983" name="Mol. Gen. Genet.">
        <title>Yeast ribosomal proteins: VII. Cytoplasmic ribosomal proteins from Schizosaccharomyces pombe.</title>
        <authorList>
            <person name="Otaka E."/>
            <person name="Higo K."/>
            <person name="Itoh T."/>
        </authorList>
    </citation>
    <scope>PROTEIN SEQUENCE OF 2-20</scope>
</reference>
<reference key="4">
    <citation type="journal article" date="2006" name="Nat. Biotechnol.">
        <title>ORFeome cloning and global analysis of protein localization in the fission yeast Schizosaccharomyces pombe.</title>
        <authorList>
            <person name="Matsuyama A."/>
            <person name="Arai R."/>
            <person name="Yashiroda Y."/>
            <person name="Shirai A."/>
            <person name="Kamata A."/>
            <person name="Sekido S."/>
            <person name="Kobayashi Y."/>
            <person name="Hashimoto A."/>
            <person name="Hamamoto M."/>
            <person name="Hiraoka Y."/>
            <person name="Horinouchi S."/>
            <person name="Yoshida M."/>
        </authorList>
    </citation>
    <scope>SUBCELLULAR LOCATION [LARGE SCALE ANALYSIS]</scope>
</reference>
<reference key="5">
    <citation type="journal article" date="2008" name="J. Proteome Res.">
        <title>Phosphoproteome analysis of fission yeast.</title>
        <authorList>
            <person name="Wilson-Grady J.T."/>
            <person name="Villen J."/>
            <person name="Gygi S.P."/>
        </authorList>
    </citation>
    <scope>PHOSPHORYLATION [LARGE SCALE ANALYSIS] AT SER-13; SER-65; SER-140; SER-143; SER-207; SER-295; SER-355 AND THR-372</scope>
    <scope>IDENTIFICATION BY MASS SPECTROMETRY</scope>
</reference>
<protein>
    <recommendedName>
        <fullName evidence="7">Large ribosomal subunit protein uL3A</fullName>
    </recommendedName>
    <alternativeName>
        <fullName>60S ribosomal protein L3-A</fullName>
    </alternativeName>
    <alternativeName>
        <fullName evidence="6">SP-L1</fullName>
    </alternativeName>
</protein>
<evidence type="ECO:0000250" key="1">
    <source>
        <dbReference type="UniProtKB" id="P14126"/>
    </source>
</evidence>
<evidence type="ECO:0000256" key="2">
    <source>
        <dbReference type="SAM" id="MobiDB-lite"/>
    </source>
</evidence>
<evidence type="ECO:0000269" key="3">
    <source>
    </source>
</evidence>
<evidence type="ECO:0000269" key="4">
    <source>
    </source>
</evidence>
<evidence type="ECO:0000269" key="5">
    <source>
    </source>
</evidence>
<evidence type="ECO:0000303" key="6">
    <source>
    </source>
</evidence>
<evidence type="ECO:0000305" key="7"/>
<evidence type="ECO:0007829" key="8">
    <source>
        <dbReference type="PDB" id="8ETC"/>
    </source>
</evidence>
<evidence type="ECO:0007829" key="9">
    <source>
        <dbReference type="PDB" id="8EUY"/>
    </source>
</evidence>
<evidence type="ECO:0007829" key="10">
    <source>
        <dbReference type="PDB" id="8EV3"/>
    </source>
</evidence>
<feature type="initiator methionine" description="Removed" evidence="5">
    <location>
        <position position="1"/>
    </location>
</feature>
<feature type="chain" id="PRO_0000077249" description="Large ribosomal subunit protein uL3A">
    <location>
        <begin position="2"/>
        <end position="388"/>
    </location>
</feature>
<feature type="region of interest" description="Disordered" evidence="2">
    <location>
        <begin position="1"/>
        <end position="34"/>
    </location>
</feature>
<feature type="compositionally biased region" description="Basic and acidic residues" evidence="2">
    <location>
        <begin position="1"/>
        <end position="10"/>
    </location>
</feature>
<feature type="compositionally biased region" description="Basic residues" evidence="2">
    <location>
        <begin position="18"/>
        <end position="31"/>
    </location>
</feature>
<feature type="modified residue" description="Phosphoserine" evidence="4">
    <location>
        <position position="13"/>
    </location>
</feature>
<feature type="modified residue" description="Phosphoserine" evidence="4">
    <location>
        <position position="65"/>
    </location>
</feature>
<feature type="modified residue" description="Phosphoserine" evidence="4">
    <location>
        <position position="140"/>
    </location>
</feature>
<feature type="modified residue" description="Phosphoserine" evidence="4">
    <location>
        <position position="143"/>
    </location>
</feature>
<feature type="modified residue" description="Phosphoserine" evidence="4">
    <location>
        <position position="207"/>
    </location>
</feature>
<feature type="modified residue" description="Phosphoserine" evidence="4">
    <location>
        <position position="295"/>
    </location>
</feature>
<feature type="modified residue" description="Phosphoserine" evidence="4">
    <location>
        <position position="355"/>
    </location>
</feature>
<feature type="modified residue" description="Phosphothreonine" evidence="4">
    <location>
        <position position="372"/>
    </location>
</feature>
<feature type="turn" evidence="10">
    <location>
        <begin position="14"/>
        <end position="16"/>
    </location>
</feature>
<feature type="strand" evidence="10">
    <location>
        <begin position="37"/>
        <end position="39"/>
    </location>
</feature>
<feature type="strand" evidence="9">
    <location>
        <begin position="41"/>
        <end position="43"/>
    </location>
</feature>
<feature type="strand" evidence="9">
    <location>
        <begin position="45"/>
        <end position="52"/>
    </location>
</feature>
<feature type="strand" evidence="9">
    <location>
        <begin position="56"/>
        <end position="59"/>
    </location>
</feature>
<feature type="turn" evidence="9">
    <location>
        <begin position="66"/>
        <end position="69"/>
    </location>
</feature>
<feature type="strand" evidence="9">
    <location>
        <begin position="71"/>
        <end position="74"/>
    </location>
</feature>
<feature type="strand" evidence="9">
    <location>
        <begin position="76"/>
        <end position="80"/>
    </location>
</feature>
<feature type="strand" evidence="9">
    <location>
        <begin position="84"/>
        <end position="95"/>
    </location>
</feature>
<feature type="strand" evidence="9">
    <location>
        <begin position="98"/>
        <end position="106"/>
    </location>
</feature>
<feature type="helix" evidence="9">
    <location>
        <begin position="112"/>
        <end position="118"/>
    </location>
</feature>
<feature type="strand" evidence="9">
    <location>
        <begin position="120"/>
        <end position="122"/>
    </location>
</feature>
<feature type="helix" evidence="9">
    <location>
        <begin position="131"/>
        <end position="139"/>
    </location>
</feature>
<feature type="helix" evidence="9">
    <location>
        <begin position="141"/>
        <end position="153"/>
    </location>
</feature>
<feature type="strand" evidence="9">
    <location>
        <begin position="156"/>
        <end position="163"/>
    </location>
</feature>
<feature type="turn" evidence="9">
    <location>
        <begin position="166"/>
        <end position="170"/>
    </location>
</feature>
<feature type="strand" evidence="9">
    <location>
        <begin position="178"/>
        <end position="186"/>
    </location>
</feature>
<feature type="helix" evidence="9">
    <location>
        <begin position="188"/>
        <end position="197"/>
    </location>
</feature>
<feature type="turn" evidence="9">
    <location>
        <begin position="198"/>
        <end position="200"/>
    </location>
</feature>
<feature type="strand" evidence="9">
    <location>
        <begin position="201"/>
        <end position="203"/>
    </location>
</feature>
<feature type="helix" evidence="9">
    <location>
        <begin position="205"/>
        <end position="208"/>
    </location>
</feature>
<feature type="strand" evidence="9">
    <location>
        <begin position="211"/>
        <end position="215"/>
    </location>
</feature>
<feature type="strand" evidence="9">
    <location>
        <begin position="218"/>
        <end position="220"/>
    </location>
</feature>
<feature type="strand" evidence="8">
    <location>
        <begin position="223"/>
        <end position="227"/>
    </location>
</feature>
<feature type="helix" evidence="8">
    <location>
        <begin position="229"/>
        <end position="233"/>
    </location>
</feature>
<feature type="strand" evidence="8">
    <location>
        <begin position="268"/>
        <end position="271"/>
    </location>
</feature>
<feature type="strand" evidence="9">
    <location>
        <begin position="274"/>
        <end position="276"/>
    </location>
</feature>
<feature type="strand" evidence="9">
    <location>
        <begin position="281"/>
        <end position="284"/>
    </location>
</feature>
<feature type="turn" evidence="10">
    <location>
        <begin position="291"/>
        <end position="294"/>
    </location>
</feature>
<feature type="strand" evidence="10">
    <location>
        <begin position="297"/>
        <end position="299"/>
    </location>
</feature>
<feature type="turn" evidence="9">
    <location>
        <begin position="312"/>
        <end position="314"/>
    </location>
</feature>
<feature type="strand" evidence="9">
    <location>
        <begin position="321"/>
        <end position="326"/>
    </location>
</feature>
<feature type="strand" evidence="9">
    <location>
        <begin position="335"/>
        <end position="340"/>
    </location>
</feature>
<feature type="helix" evidence="9">
    <location>
        <begin position="348"/>
        <end position="351"/>
    </location>
</feature>
<feature type="strand" evidence="9">
    <location>
        <begin position="355"/>
        <end position="358"/>
    </location>
</feature>
<feature type="strand" evidence="9">
    <location>
        <begin position="364"/>
        <end position="366"/>
    </location>
</feature>
<feature type="strand" evidence="9">
    <location>
        <begin position="369"/>
        <end position="371"/>
    </location>
</feature>
<feature type="helix" evidence="9">
    <location>
        <begin position="373"/>
        <end position="379"/>
    </location>
</feature>
<organism>
    <name type="scientific">Schizosaccharomyces pombe (strain 972 / ATCC 24843)</name>
    <name type="common">Fission yeast</name>
    <dbReference type="NCBI Taxonomy" id="284812"/>
    <lineage>
        <taxon>Eukaryota</taxon>
        <taxon>Fungi</taxon>
        <taxon>Dikarya</taxon>
        <taxon>Ascomycota</taxon>
        <taxon>Taphrinomycotina</taxon>
        <taxon>Schizosaccharomycetes</taxon>
        <taxon>Schizosaccharomycetales</taxon>
        <taxon>Schizosaccharomycetaceae</taxon>
        <taxon>Schizosaccharomyces</taxon>
    </lineage>
</organism>
<accession>P40372</accession>
<keyword id="KW-0002">3D-structure</keyword>
<keyword id="KW-0963">Cytoplasm</keyword>
<keyword id="KW-0903">Direct protein sequencing</keyword>
<keyword id="KW-0597">Phosphoprotein</keyword>
<keyword id="KW-1185">Reference proteome</keyword>
<keyword id="KW-0687">Ribonucleoprotein</keyword>
<keyword id="KW-0689">Ribosomal protein</keyword>
<comment type="function">
    <text evidence="1">Component of the ribosome, a large ribonucleoprotein complex responsible for the synthesis of proteins in the cell. The small ribosomal subunit (SSU) binds messenger RNAs (mRNAs) and translates the encoded message by selecting cognate aminoacyl-transfer RNA (tRNA) molecules. The large subunit (LSU) contains the ribosomal catalytic site termed the peptidyl transferase center (PTC), which catalyzes the formation of peptide bonds, thereby polymerizing the amino acids delivered by tRNAs into a polypeptide chain. The nascent polypeptides leave the ribosome through a tunnel in the LSU and interact with protein factors that function in enzymatic processing, targeting, and the membrane insertion of nascent chains at the exit of the ribosomal tunnel. uL3 plays a role in coordinating processes of accommodating the aminoacyl-tRNA in the PTC.</text>
</comment>
<comment type="subunit">
    <text evidence="1">Component of the large ribosomal subunit (LSU). Mature yeast ribosomes consist of a small (40S) and a large (60S) subunit. The 40S small subunit contains 1 molecule of ribosomal RNA (18S rRNA) and at least 33 different proteins. The large 60S subunit contains 3 rRNA molecules (25S, 5.8S and 5S rRNA) and at least 46 different proteins. uL3 forms together with ES39L one of the contact sites for the signal recognition particle that targets ribosomes to the endoplasmic reticulum membrane.</text>
</comment>
<comment type="subcellular location">
    <subcellularLocation>
        <location evidence="3">Cytoplasm</location>
    </subcellularLocation>
</comment>
<comment type="miscellaneous">
    <text>There are 2 genes for uL3 in S.pombe.</text>
</comment>
<comment type="similarity">
    <text evidence="7">Belongs to the universal ribosomal protein uL3 family.</text>
</comment>
<proteinExistence type="evidence at protein level"/>